<protein>
    <recommendedName>
        <fullName>Spindle pole body component SPC42</fullName>
    </recommendedName>
</protein>
<dbReference type="EMBL" id="ADVS01000035">
    <property type="protein sequence ID" value="EGA74197.1"/>
    <property type="molecule type" value="Genomic_DNA"/>
</dbReference>
<dbReference type="SMR" id="E7KEZ1"/>
<dbReference type="HOGENOM" id="CLU_761996_0_0_1"/>
<dbReference type="OMA" id="HNHATHR"/>
<dbReference type="OrthoDB" id="4061426at2759"/>
<dbReference type="GO" id="GO:0005737">
    <property type="term" value="C:cytoplasm"/>
    <property type="evidence" value="ECO:0007669"/>
    <property type="project" value="UniProtKB-KW"/>
</dbReference>
<dbReference type="GO" id="GO:0005634">
    <property type="term" value="C:nucleus"/>
    <property type="evidence" value="ECO:0007669"/>
    <property type="project" value="UniProtKB-SubCell"/>
</dbReference>
<dbReference type="GO" id="GO:0005816">
    <property type="term" value="C:spindle pole body"/>
    <property type="evidence" value="ECO:0007669"/>
    <property type="project" value="UniProtKB-SubCell"/>
</dbReference>
<dbReference type="Gene3D" id="1.20.5.1180">
    <property type="entry name" value="Geminin coiled-coil domain"/>
    <property type="match status" value="1"/>
</dbReference>
<dbReference type="InterPro" id="IPR021611">
    <property type="entry name" value="Spc42"/>
</dbReference>
<dbReference type="Pfam" id="PF11544">
    <property type="entry name" value="Spc42p"/>
    <property type="match status" value="1"/>
</dbReference>
<accession>E7KEZ1</accession>
<evidence type="ECO:0000250" key="1"/>
<evidence type="ECO:0000250" key="2">
    <source>
        <dbReference type="UniProtKB" id="P36094"/>
    </source>
</evidence>
<evidence type="ECO:0000255" key="3"/>
<evidence type="ECO:0000256" key="4">
    <source>
        <dbReference type="SAM" id="MobiDB-lite"/>
    </source>
</evidence>
<evidence type="ECO:0000305" key="5"/>
<reference key="1">
    <citation type="journal article" date="2011" name="PLoS Genet.">
        <title>Whole-genome comparison reveals novel genetic elements that characterize the genome of industrial strains of Saccharomyces cerevisiae.</title>
        <authorList>
            <person name="Borneman A.R."/>
            <person name="Desany B.A."/>
            <person name="Riches D."/>
            <person name="Affourtit J.P."/>
            <person name="Forgan A.H."/>
            <person name="Pretorius I.S."/>
            <person name="Egholm M."/>
            <person name="Chambers P.J."/>
        </authorList>
    </citation>
    <scope>NUCLEOTIDE SEQUENCE [LARGE SCALE GENOMIC DNA]</scope>
    <source>
        <strain>AWRI796</strain>
    </source>
</reference>
<feature type="chain" id="PRO_0000409216" description="Spindle pole body component SPC42">
    <location>
        <begin position="1"/>
        <end position="363"/>
    </location>
</feature>
<feature type="region of interest" description="Disordered" evidence="4">
    <location>
        <begin position="160"/>
        <end position="184"/>
    </location>
</feature>
<feature type="region of interest" description="Disordered" evidence="4">
    <location>
        <begin position="310"/>
        <end position="363"/>
    </location>
</feature>
<feature type="coiled-coil region" evidence="3">
    <location>
        <begin position="62"/>
        <end position="136"/>
    </location>
</feature>
<feature type="coiled-coil region" evidence="3">
    <location>
        <begin position="248"/>
        <end position="297"/>
    </location>
</feature>
<feature type="compositionally biased region" description="Polar residues" evidence="4">
    <location>
        <begin position="170"/>
        <end position="182"/>
    </location>
</feature>
<feature type="compositionally biased region" description="Low complexity" evidence="4">
    <location>
        <begin position="319"/>
        <end position="329"/>
    </location>
</feature>
<feature type="compositionally biased region" description="Polar residues" evidence="4">
    <location>
        <begin position="349"/>
        <end position="363"/>
    </location>
</feature>
<feature type="modified residue" description="Phosphoserine" evidence="2">
    <location>
        <position position="213"/>
    </location>
</feature>
<feature type="modified residue" description="Phosphoserine" evidence="2">
    <location>
        <position position="217"/>
    </location>
</feature>
<feature type="modified residue" description="Phosphoserine" evidence="2">
    <location>
        <position position="284"/>
    </location>
</feature>
<feature type="modified residue" description="Phosphoserine" evidence="2">
    <location>
        <position position="329"/>
    </location>
</feature>
<organism>
    <name type="scientific">Saccharomyces cerevisiae (strain AWRI796)</name>
    <name type="common">Baker's yeast</name>
    <dbReference type="NCBI Taxonomy" id="764097"/>
    <lineage>
        <taxon>Eukaryota</taxon>
        <taxon>Fungi</taxon>
        <taxon>Dikarya</taxon>
        <taxon>Ascomycota</taxon>
        <taxon>Saccharomycotina</taxon>
        <taxon>Saccharomycetes</taxon>
        <taxon>Saccharomycetales</taxon>
        <taxon>Saccharomycetaceae</taxon>
        <taxon>Saccharomyces</taxon>
    </lineage>
</organism>
<keyword id="KW-0175">Coiled coil</keyword>
<keyword id="KW-0963">Cytoplasm</keyword>
<keyword id="KW-0206">Cytoskeleton</keyword>
<keyword id="KW-0539">Nucleus</keyword>
<keyword id="KW-0597">Phosphoprotein</keyword>
<comment type="function">
    <text evidence="1">Forms a polymeric layer at the periphery of the spindle pole body (SPB) central plaque which has an essential function during SPB duplication and may facilitate attachment of the SPB to the nuclear membrane.</text>
</comment>
<comment type="subunit">
    <text evidence="1">Component of the SPC110 complex containing at least CMD1, SPC29, SPC42 and SCP110.</text>
</comment>
<comment type="subcellular location">
    <subcellularLocation>
        <location evidence="1">Nucleus</location>
    </subcellularLocation>
    <subcellularLocation>
        <location evidence="1">Cytoplasm</location>
        <location evidence="1">Cytoskeleton</location>
        <location evidence="1">Microtubule organizing center</location>
        <location evidence="1">Spindle pole body</location>
    </subcellularLocation>
</comment>
<comment type="similarity">
    <text evidence="5">Belongs to the SPC42 family.</text>
</comment>
<sequence length="363" mass="42245">MNGSPTPKRYSSKSSRLYDDYYNIPYQYSNPTPMNRDYNDVGSRINADKLVPEEYKRNTEFINKAVQQNKELNFKLREKQNEIFELKKIAETLRSKLEKYVDITKKLEDQNLNLQIKISDLEKKLSDANSTFKEMRFPKVKDPMVDDDPVSENYDQINVPKHRAPDATGNPRTTNKVSNTSDQDSRLKAIERTLSVLTNYVMRSEDGNNDRMSPLPSPLNTISPINNRLNFQEPKRYNPTVKVNPSDDDIMMYESAELKRVEEEIEELKRKILVRKKHDLRKLSLNNQLQELQSMMDGDDNIKLDNVSKHNHATHRHSSQSSRDYSPSSDACLECSNDLYEKNRVKPENNMSETFATPTPNNR</sequence>
<gene>
    <name type="primary">SPC42</name>
    <name type="ORF">AWRI796_2915</name>
</gene>
<proteinExistence type="inferred from homology"/>
<name>SPC42_YEASA</name>